<feature type="chain" id="PRO_0000334624" description="Homeobox protein unc-4 homolog">
    <location>
        <begin position="1"/>
        <end position="531"/>
    </location>
</feature>
<feature type="DNA-binding region" description="Homeobox" evidence="2">
    <location>
        <begin position="105"/>
        <end position="164"/>
    </location>
</feature>
<feature type="region of interest" description="Disordered" evidence="3">
    <location>
        <begin position="87"/>
        <end position="107"/>
    </location>
</feature>
<feature type="region of interest" description="Disordered" evidence="3">
    <location>
        <begin position="161"/>
        <end position="312"/>
    </location>
</feature>
<feature type="region of interest" description="Disordered" evidence="3">
    <location>
        <begin position="324"/>
        <end position="344"/>
    </location>
</feature>
<feature type="region of interest" description="Disordered" evidence="3">
    <location>
        <begin position="401"/>
        <end position="531"/>
    </location>
</feature>
<feature type="compositionally biased region" description="Basic and acidic residues" evidence="3">
    <location>
        <begin position="191"/>
        <end position="201"/>
    </location>
</feature>
<feature type="compositionally biased region" description="Basic residues" evidence="3">
    <location>
        <begin position="202"/>
        <end position="220"/>
    </location>
</feature>
<feature type="compositionally biased region" description="Low complexity" evidence="3">
    <location>
        <begin position="224"/>
        <end position="236"/>
    </location>
</feature>
<feature type="compositionally biased region" description="Pro residues" evidence="3">
    <location>
        <begin position="244"/>
        <end position="254"/>
    </location>
</feature>
<feature type="compositionally biased region" description="Low complexity" evidence="3">
    <location>
        <begin position="255"/>
        <end position="268"/>
    </location>
</feature>
<feature type="compositionally biased region" description="Pro residues" evidence="3">
    <location>
        <begin position="269"/>
        <end position="278"/>
    </location>
</feature>
<feature type="compositionally biased region" description="Pro residues" evidence="3">
    <location>
        <begin position="407"/>
        <end position="420"/>
    </location>
</feature>
<feature type="compositionally biased region" description="Low complexity" evidence="3">
    <location>
        <begin position="421"/>
        <end position="438"/>
    </location>
</feature>
<feature type="compositionally biased region" description="Pro residues" evidence="3">
    <location>
        <begin position="484"/>
        <end position="503"/>
    </location>
</feature>
<feature type="compositionally biased region" description="Low complexity" evidence="3">
    <location>
        <begin position="504"/>
        <end position="519"/>
    </location>
</feature>
<protein>
    <recommendedName>
        <fullName>Homeobox protein unc-4 homolog</fullName>
    </recommendedName>
    <alternativeName>
        <fullName>Homeobox protein Uncx4.1</fullName>
    </alternativeName>
</protein>
<name>UNC4_HUMAN</name>
<accession>A6NJT0</accession>
<accession>A4D221</accession>
<gene>
    <name type="primary">UNCX</name>
    <name type="synonym">UNCX4.1</name>
</gene>
<proteinExistence type="evidence at protein level"/>
<organism>
    <name type="scientific">Homo sapiens</name>
    <name type="common">Human</name>
    <dbReference type="NCBI Taxonomy" id="9606"/>
    <lineage>
        <taxon>Eukaryota</taxon>
        <taxon>Metazoa</taxon>
        <taxon>Chordata</taxon>
        <taxon>Craniata</taxon>
        <taxon>Vertebrata</taxon>
        <taxon>Euteleostomi</taxon>
        <taxon>Mammalia</taxon>
        <taxon>Eutheria</taxon>
        <taxon>Euarchontoglires</taxon>
        <taxon>Primates</taxon>
        <taxon>Haplorrhini</taxon>
        <taxon>Catarrhini</taxon>
        <taxon>Hominidae</taxon>
        <taxon>Homo</taxon>
    </lineage>
</organism>
<comment type="function">
    <text evidence="1">Transcription factor involved in somitogenesis and neurogenesis. Required for the maintenance and differentiation of particular elements of the axial skeleton. May act upstream of PAX9. Plays a role in controlling the development of connections of hypothalamic neurons to pituitary elements, allowing central neurons to reach the peripheral blood circulation and to deliver hormones for control of peripheral functions (By similarity).</text>
</comment>
<comment type="subcellular location">
    <subcellularLocation>
        <location evidence="2">Nucleus</location>
    </subcellularLocation>
</comment>
<comment type="similarity">
    <text evidence="4">Belongs to the paired homeobox family. Unc-4 subfamily.</text>
</comment>
<reference key="1">
    <citation type="journal article" date="2003" name="Nature">
        <title>The DNA sequence of human chromosome 7.</title>
        <authorList>
            <person name="Hillier L.W."/>
            <person name="Fulton R.S."/>
            <person name="Fulton L.A."/>
            <person name="Graves T.A."/>
            <person name="Pepin K.H."/>
            <person name="Wagner-McPherson C."/>
            <person name="Layman D."/>
            <person name="Maas J."/>
            <person name="Jaeger S."/>
            <person name="Walker R."/>
            <person name="Wylie K."/>
            <person name="Sekhon M."/>
            <person name="Becker M.C."/>
            <person name="O'Laughlin M.D."/>
            <person name="Schaller M.E."/>
            <person name="Fewell G.A."/>
            <person name="Delehaunty K.D."/>
            <person name="Miner T.L."/>
            <person name="Nash W.E."/>
            <person name="Cordes M."/>
            <person name="Du H."/>
            <person name="Sun H."/>
            <person name="Edwards J."/>
            <person name="Bradshaw-Cordum H."/>
            <person name="Ali J."/>
            <person name="Andrews S."/>
            <person name="Isak A."/>
            <person name="Vanbrunt A."/>
            <person name="Nguyen C."/>
            <person name="Du F."/>
            <person name="Lamar B."/>
            <person name="Courtney L."/>
            <person name="Kalicki J."/>
            <person name="Ozersky P."/>
            <person name="Bielicki L."/>
            <person name="Scott K."/>
            <person name="Holmes A."/>
            <person name="Harkins R."/>
            <person name="Harris A."/>
            <person name="Strong C.M."/>
            <person name="Hou S."/>
            <person name="Tomlinson C."/>
            <person name="Dauphin-Kohlberg S."/>
            <person name="Kozlowicz-Reilly A."/>
            <person name="Leonard S."/>
            <person name="Rohlfing T."/>
            <person name="Rock S.M."/>
            <person name="Tin-Wollam A.-M."/>
            <person name="Abbott A."/>
            <person name="Minx P."/>
            <person name="Maupin R."/>
            <person name="Strowmatt C."/>
            <person name="Latreille P."/>
            <person name="Miller N."/>
            <person name="Johnson D."/>
            <person name="Murray J."/>
            <person name="Woessner J.P."/>
            <person name="Wendl M.C."/>
            <person name="Yang S.-P."/>
            <person name="Schultz B.R."/>
            <person name="Wallis J.W."/>
            <person name="Spieth J."/>
            <person name="Bieri T.A."/>
            <person name="Nelson J.O."/>
            <person name="Berkowicz N."/>
            <person name="Wohldmann P.E."/>
            <person name="Cook L.L."/>
            <person name="Hickenbotham M.T."/>
            <person name="Eldred J."/>
            <person name="Williams D."/>
            <person name="Bedell J.A."/>
            <person name="Mardis E.R."/>
            <person name="Clifton S.W."/>
            <person name="Chissoe S.L."/>
            <person name="Marra M.A."/>
            <person name="Raymond C."/>
            <person name="Haugen E."/>
            <person name="Gillett W."/>
            <person name="Zhou Y."/>
            <person name="James R."/>
            <person name="Phelps K."/>
            <person name="Iadanoto S."/>
            <person name="Bubb K."/>
            <person name="Simms E."/>
            <person name="Levy R."/>
            <person name="Clendenning J."/>
            <person name="Kaul R."/>
            <person name="Kent W.J."/>
            <person name="Furey T.S."/>
            <person name="Baertsch R.A."/>
            <person name="Brent M.R."/>
            <person name="Keibler E."/>
            <person name="Flicek P."/>
            <person name="Bork P."/>
            <person name="Suyama M."/>
            <person name="Bailey J.A."/>
            <person name="Portnoy M.E."/>
            <person name="Torrents D."/>
            <person name="Chinwalla A.T."/>
            <person name="Gish W.R."/>
            <person name="Eddy S.R."/>
            <person name="McPherson J.D."/>
            <person name="Olson M.V."/>
            <person name="Eichler E.E."/>
            <person name="Green E.D."/>
            <person name="Waterston R.H."/>
            <person name="Wilson R.K."/>
        </authorList>
    </citation>
    <scope>NUCLEOTIDE SEQUENCE [LARGE SCALE GENOMIC DNA]</scope>
</reference>
<reference key="2">
    <citation type="journal article" date="2003" name="Science">
        <title>Human chromosome 7: DNA sequence and biology.</title>
        <authorList>
            <person name="Scherer S.W."/>
            <person name="Cheung J."/>
            <person name="MacDonald J.R."/>
            <person name="Osborne L.R."/>
            <person name="Nakabayashi K."/>
            <person name="Herbrick J.-A."/>
            <person name="Carson A.R."/>
            <person name="Parker-Katiraee L."/>
            <person name="Skaug J."/>
            <person name="Khaja R."/>
            <person name="Zhang J."/>
            <person name="Hudek A.K."/>
            <person name="Li M."/>
            <person name="Haddad M."/>
            <person name="Duggan G.E."/>
            <person name="Fernandez B.A."/>
            <person name="Kanematsu E."/>
            <person name="Gentles S."/>
            <person name="Christopoulos C.C."/>
            <person name="Choufani S."/>
            <person name="Kwasnicka D."/>
            <person name="Zheng X.H."/>
            <person name="Lai Z."/>
            <person name="Nusskern D.R."/>
            <person name="Zhang Q."/>
            <person name="Gu Z."/>
            <person name="Lu F."/>
            <person name="Zeesman S."/>
            <person name="Nowaczyk M.J."/>
            <person name="Teshima I."/>
            <person name="Chitayat D."/>
            <person name="Shuman C."/>
            <person name="Weksberg R."/>
            <person name="Zackai E.H."/>
            <person name="Grebe T.A."/>
            <person name="Cox S.R."/>
            <person name="Kirkpatrick S.J."/>
            <person name="Rahman N."/>
            <person name="Friedman J.M."/>
            <person name="Heng H.H.Q."/>
            <person name="Pelicci P.G."/>
            <person name="Lo-Coco F."/>
            <person name="Belloni E."/>
            <person name="Shaffer L.G."/>
            <person name="Pober B."/>
            <person name="Morton C.C."/>
            <person name="Gusella J.F."/>
            <person name="Bruns G.A.P."/>
            <person name="Korf B.R."/>
            <person name="Quade B.J."/>
            <person name="Ligon A.H."/>
            <person name="Ferguson H."/>
            <person name="Higgins A.W."/>
            <person name="Leach N.T."/>
            <person name="Herrick S.R."/>
            <person name="Lemyre E."/>
            <person name="Farra C.G."/>
            <person name="Kim H.-G."/>
            <person name="Summers A.M."/>
            <person name="Gripp K.W."/>
            <person name="Roberts W."/>
            <person name="Szatmari P."/>
            <person name="Winsor E.J.T."/>
            <person name="Grzeschik K.-H."/>
            <person name="Teebi A."/>
            <person name="Minassian B.A."/>
            <person name="Kere J."/>
            <person name="Armengol L."/>
            <person name="Pujana M.A."/>
            <person name="Estivill X."/>
            <person name="Wilson M.D."/>
            <person name="Koop B.F."/>
            <person name="Tosi S."/>
            <person name="Moore G.E."/>
            <person name="Boright A.P."/>
            <person name="Zlotorynski E."/>
            <person name="Kerem B."/>
            <person name="Kroisel P.M."/>
            <person name="Petek E."/>
            <person name="Oscier D.G."/>
            <person name="Mould S.J."/>
            <person name="Doehner H."/>
            <person name="Doehner K."/>
            <person name="Rommens J.M."/>
            <person name="Vincent J.B."/>
            <person name="Venter J.C."/>
            <person name="Li P.W."/>
            <person name="Mural R.J."/>
            <person name="Adams M.D."/>
            <person name="Tsui L.-C."/>
        </authorList>
    </citation>
    <scope>NUCLEOTIDE SEQUENCE [LARGE SCALE GENOMIC DNA]</scope>
</reference>
<evidence type="ECO:0000250" key="1"/>
<evidence type="ECO:0000255" key="2">
    <source>
        <dbReference type="PROSITE-ProRule" id="PRU00108"/>
    </source>
</evidence>
<evidence type="ECO:0000256" key="3">
    <source>
        <dbReference type="SAM" id="MobiDB-lite"/>
    </source>
</evidence>
<evidence type="ECO:0000305" key="4"/>
<dbReference type="EMBL" id="AC073094">
    <property type="status" value="NOT_ANNOTATED_CDS"/>
    <property type="molecule type" value="Genomic_DNA"/>
</dbReference>
<dbReference type="EMBL" id="CH236953">
    <property type="protein sequence ID" value="EAL23940.1"/>
    <property type="status" value="ALT_SEQ"/>
    <property type="molecule type" value="Genomic_DNA"/>
</dbReference>
<dbReference type="CCDS" id="CCDS34583.1"/>
<dbReference type="RefSeq" id="NP_001073930.1">
    <property type="nucleotide sequence ID" value="NM_001080461.3"/>
</dbReference>
<dbReference type="BioGRID" id="131024">
    <property type="interactions" value="4"/>
</dbReference>
<dbReference type="FunCoup" id="A6NJT0">
    <property type="interactions" value="289"/>
</dbReference>
<dbReference type="IntAct" id="A6NJT0">
    <property type="interactions" value="1"/>
</dbReference>
<dbReference type="STRING" id="9606.ENSP00000314480"/>
<dbReference type="iPTMnet" id="A6NJT0"/>
<dbReference type="PhosphoSitePlus" id="A6NJT0"/>
<dbReference type="BioMuta" id="UNCX"/>
<dbReference type="jPOST" id="A6NJT0"/>
<dbReference type="MassIVE" id="A6NJT0"/>
<dbReference type="PaxDb" id="9606-ENSP00000314480"/>
<dbReference type="PeptideAtlas" id="A6NJT0"/>
<dbReference type="ProteomicsDB" id="1352"/>
<dbReference type="Antibodypedia" id="24186">
    <property type="antibodies" value="128 antibodies from 22 providers"/>
</dbReference>
<dbReference type="DNASU" id="340260"/>
<dbReference type="Ensembl" id="ENST00000316333.9">
    <property type="protein sequence ID" value="ENSP00000314480.8"/>
    <property type="gene ID" value="ENSG00000164853.9"/>
</dbReference>
<dbReference type="GeneID" id="340260"/>
<dbReference type="KEGG" id="hsa:340260"/>
<dbReference type="MANE-Select" id="ENST00000316333.9">
    <property type="protein sequence ID" value="ENSP00000314480.8"/>
    <property type="RefSeq nucleotide sequence ID" value="NM_001080461.3"/>
    <property type="RefSeq protein sequence ID" value="NP_001073930.1"/>
</dbReference>
<dbReference type="UCSC" id="uc011jvw.3">
    <property type="organism name" value="human"/>
</dbReference>
<dbReference type="AGR" id="HGNC:33194"/>
<dbReference type="CTD" id="340260"/>
<dbReference type="DisGeNET" id="340260"/>
<dbReference type="GeneCards" id="UNCX"/>
<dbReference type="HGNC" id="HGNC:33194">
    <property type="gene designation" value="UNCX"/>
</dbReference>
<dbReference type="HPA" id="ENSG00000164853">
    <property type="expression patterns" value="Tissue enriched (brain)"/>
</dbReference>
<dbReference type="neXtProt" id="NX_A6NJT0"/>
<dbReference type="OpenTargets" id="ENSG00000164853"/>
<dbReference type="PharmGKB" id="PA162408642"/>
<dbReference type="VEuPathDB" id="HostDB:ENSG00000164853"/>
<dbReference type="eggNOG" id="KOG0490">
    <property type="taxonomic scope" value="Eukaryota"/>
</dbReference>
<dbReference type="GeneTree" id="ENSGT00940000161420"/>
<dbReference type="HOGENOM" id="CLU_041996_0_0_1"/>
<dbReference type="InParanoid" id="A6NJT0"/>
<dbReference type="OMA" id="DKDAAPC"/>
<dbReference type="OrthoDB" id="6159439at2759"/>
<dbReference type="PAN-GO" id="A6NJT0">
    <property type="GO annotations" value="2 GO annotations based on evolutionary models"/>
</dbReference>
<dbReference type="PhylomeDB" id="A6NJT0"/>
<dbReference type="TreeFam" id="TF315554"/>
<dbReference type="PathwayCommons" id="A6NJT0"/>
<dbReference type="BioGRID-ORCS" id="340260">
    <property type="hits" value="24 hits in 1163 CRISPR screens"/>
</dbReference>
<dbReference type="GenomeRNAi" id="340260"/>
<dbReference type="Pharos" id="A6NJT0">
    <property type="development level" value="Tbio"/>
</dbReference>
<dbReference type="PRO" id="PR:A6NJT0"/>
<dbReference type="Proteomes" id="UP000005640">
    <property type="component" value="Chromosome 7"/>
</dbReference>
<dbReference type="RNAct" id="A6NJT0">
    <property type="molecule type" value="protein"/>
</dbReference>
<dbReference type="Bgee" id="ENSG00000164853">
    <property type="expression patterns" value="Expressed in cerebellum and 19 other cell types or tissues"/>
</dbReference>
<dbReference type="GO" id="GO:0000785">
    <property type="term" value="C:chromatin"/>
    <property type="evidence" value="ECO:0000247"/>
    <property type="project" value="NTNU_SB"/>
</dbReference>
<dbReference type="GO" id="GO:0005634">
    <property type="term" value="C:nucleus"/>
    <property type="evidence" value="ECO:0007669"/>
    <property type="project" value="UniProtKB-SubCell"/>
</dbReference>
<dbReference type="GO" id="GO:0000981">
    <property type="term" value="F:DNA-binding transcription factor activity, RNA polymerase II-specific"/>
    <property type="evidence" value="ECO:0000247"/>
    <property type="project" value="NTNU_SB"/>
</dbReference>
<dbReference type="GO" id="GO:1990837">
    <property type="term" value="F:sequence-specific double-stranded DNA binding"/>
    <property type="evidence" value="ECO:0000314"/>
    <property type="project" value="ARUK-UCL"/>
</dbReference>
<dbReference type="GO" id="GO:0001502">
    <property type="term" value="P:cartilage condensation"/>
    <property type="evidence" value="ECO:0007669"/>
    <property type="project" value="Ensembl"/>
</dbReference>
<dbReference type="GO" id="GO:0035726">
    <property type="term" value="P:common myeloid progenitor cell proliferation"/>
    <property type="evidence" value="ECO:0007669"/>
    <property type="project" value="Ensembl"/>
</dbReference>
<dbReference type="GO" id="GO:0021516">
    <property type="term" value="P:dorsal spinal cord development"/>
    <property type="evidence" value="ECO:0007669"/>
    <property type="project" value="Ensembl"/>
</dbReference>
<dbReference type="GO" id="GO:0021889">
    <property type="term" value="P:olfactory bulb interneuron differentiation"/>
    <property type="evidence" value="ECO:0007669"/>
    <property type="project" value="Ensembl"/>
</dbReference>
<dbReference type="GO" id="GO:0007389">
    <property type="term" value="P:pattern specification process"/>
    <property type="evidence" value="ECO:0007669"/>
    <property type="project" value="Ensembl"/>
</dbReference>
<dbReference type="GO" id="GO:0045595">
    <property type="term" value="P:regulation of cell differentiation"/>
    <property type="evidence" value="ECO:0007669"/>
    <property type="project" value="Ensembl"/>
</dbReference>
<dbReference type="GO" id="GO:0010468">
    <property type="term" value="P:regulation of gene expression"/>
    <property type="evidence" value="ECO:0000318"/>
    <property type="project" value="GO_Central"/>
</dbReference>
<dbReference type="CDD" id="cd00086">
    <property type="entry name" value="homeodomain"/>
    <property type="match status" value="1"/>
</dbReference>
<dbReference type="FunFam" id="1.10.10.60:FF:000057">
    <property type="entry name" value="Short stature homeobox 2"/>
    <property type="match status" value="1"/>
</dbReference>
<dbReference type="Gene3D" id="1.10.10.60">
    <property type="entry name" value="Homeodomain-like"/>
    <property type="match status" value="1"/>
</dbReference>
<dbReference type="InterPro" id="IPR001356">
    <property type="entry name" value="HD"/>
</dbReference>
<dbReference type="InterPro" id="IPR017970">
    <property type="entry name" value="Homeobox_CS"/>
</dbReference>
<dbReference type="InterPro" id="IPR009057">
    <property type="entry name" value="Homeodomain-like_sf"/>
</dbReference>
<dbReference type="PANTHER" id="PTHR46799">
    <property type="entry name" value="HOMEOBOX PROTEIN UNC-4 HOMOLOG"/>
    <property type="match status" value="1"/>
</dbReference>
<dbReference type="PANTHER" id="PTHR46799:SF1">
    <property type="entry name" value="HOMEOBOX PROTEIN UNC-4 HOMOLOG"/>
    <property type="match status" value="1"/>
</dbReference>
<dbReference type="Pfam" id="PF00046">
    <property type="entry name" value="Homeodomain"/>
    <property type="match status" value="1"/>
</dbReference>
<dbReference type="SMART" id="SM00389">
    <property type="entry name" value="HOX"/>
    <property type="match status" value="1"/>
</dbReference>
<dbReference type="SUPFAM" id="SSF46689">
    <property type="entry name" value="Homeodomain-like"/>
    <property type="match status" value="1"/>
</dbReference>
<dbReference type="PROSITE" id="PS00027">
    <property type="entry name" value="HOMEOBOX_1"/>
    <property type="match status" value="1"/>
</dbReference>
<dbReference type="PROSITE" id="PS50071">
    <property type="entry name" value="HOMEOBOX_2"/>
    <property type="match status" value="1"/>
</dbReference>
<sequence>MMDGRLLEHPHAQFGGSLGGVVGFPYPLGHHHVYELAGHQLQSAAAAASVPFSIDGLLGGSCAAAASVVNPTPLLPAACGVGGDGQPFKLSDSGDPDKESPGCKRRRTRTNFTGWQLEELEKAFNESHYPDVFMREALALRLDLVESRVQVWFQNRRAKWRKKENTKKGPGRPAHNSHPTTCSGEPMDPEEIARKELEKMEKKKRKHEKKLLKSQGRHLHSPGGLSLHSAPSSDSDSGGGGLSPEPPEPPPPAAKGPGAHASGAAGTAPAPPGEPPAPGTCDPAFYPSQRSGAGPQPRPGRPADKDAASCGPGAAVAAVERGAAGLPKASPFSVESLLSDSPPRRKAASNAAAAAAAGLDFAPGLPCAPRTLIGKGHFLLYPITQPLGFLVPQAALKGGAGLEPAPKDAPPAPAVPPAPPAQASFGAFSGPGGAPDSAFARRSPDAVASPGAPAPAPAPFRDLASAAATEGGGGDCADAGTAGPAPPPPAPSPRPGPRPPSPAEEPATCGVPEPGAAAGPSPPEGEELDMD</sequence>
<keyword id="KW-0217">Developmental protein</keyword>
<keyword id="KW-0221">Differentiation</keyword>
<keyword id="KW-0238">DNA-binding</keyword>
<keyword id="KW-0371">Homeobox</keyword>
<keyword id="KW-0524">Neurogenesis</keyword>
<keyword id="KW-0539">Nucleus</keyword>
<keyword id="KW-1267">Proteomics identification</keyword>
<keyword id="KW-1185">Reference proteome</keyword>
<keyword id="KW-0804">Transcription</keyword>
<keyword id="KW-0805">Transcription regulation</keyword>